<comment type="function">
    <text evidence="1">Site-specific tyrosine recombinase, which acts by catalyzing the cutting and rejoining of the recombining DNA molecules. The XerC-XerD complex is essential to convert dimers of the bacterial chromosome into monomers to permit their segregation at cell division. It also contributes to the segregational stability of plasmids.</text>
</comment>
<comment type="subunit">
    <text evidence="1">Forms a cyclic heterotetrameric complex composed of two molecules of XerC and two molecules of XerD.</text>
</comment>
<comment type="subcellular location">
    <subcellularLocation>
        <location evidence="1">Cytoplasm</location>
    </subcellularLocation>
</comment>
<comment type="similarity">
    <text evidence="1">Belongs to the 'phage' integrase family. XerC subfamily.</text>
</comment>
<proteinExistence type="inferred from homology"/>
<sequence>MQQQLDAYCAHLRSERQVSPHTLQAYRRDLEKVLGFCEKMQVRSWTDLDIQGLRSLIARLHQQGQSSRSLARLLSAVRGLYHYLNREGLCTHDPANGLAPPKGERRLPKTLDTDRTLQLLDGAVEDDFLAHRDQAILELFYSCGLRLSELTSLNLDQLDLADGLVQVHGKGSKTRVLPVGKKARSALEQWLPLRALSNPPDGALFVSQKGRRLGPRAIQLRVKAAGERELGQNLHPHMLRHSFASHLLESSQDLRAVQELLGHSDIKTTQIYTHLDFQHLAAVYDSAHPRAKRNKGGE</sequence>
<feature type="chain" id="PRO_1000070027" description="Tyrosine recombinase XerC">
    <location>
        <begin position="1"/>
        <end position="298"/>
    </location>
</feature>
<feature type="domain" description="Core-binding (CB)" evidence="3">
    <location>
        <begin position="1"/>
        <end position="85"/>
    </location>
</feature>
<feature type="domain" description="Tyr recombinase" evidence="2">
    <location>
        <begin position="106"/>
        <end position="285"/>
    </location>
</feature>
<feature type="active site" evidence="1">
    <location>
        <position position="146"/>
    </location>
</feature>
<feature type="active site" evidence="1">
    <location>
        <position position="170"/>
    </location>
</feature>
<feature type="active site" evidence="1">
    <location>
        <position position="237"/>
    </location>
</feature>
<feature type="active site" evidence="1">
    <location>
        <position position="240"/>
    </location>
</feature>
<feature type="active site" evidence="1">
    <location>
        <position position="263"/>
    </location>
</feature>
<feature type="active site" description="O-(3'-phospho-DNA)-tyrosine intermediate" evidence="1">
    <location>
        <position position="272"/>
    </location>
</feature>
<reference key="1">
    <citation type="journal article" date="2005" name="Nat. Biotechnol.">
        <title>Complete genome sequence of the plant commensal Pseudomonas fluorescens Pf-5.</title>
        <authorList>
            <person name="Paulsen I.T."/>
            <person name="Press C.M."/>
            <person name="Ravel J."/>
            <person name="Kobayashi D.Y."/>
            <person name="Myers G.S.A."/>
            <person name="Mavrodi D.V."/>
            <person name="DeBoy R.T."/>
            <person name="Seshadri R."/>
            <person name="Ren Q."/>
            <person name="Madupu R."/>
            <person name="Dodson R.J."/>
            <person name="Durkin A.S."/>
            <person name="Brinkac L.M."/>
            <person name="Daugherty S.C."/>
            <person name="Sullivan S.A."/>
            <person name="Rosovitz M.J."/>
            <person name="Gwinn M.L."/>
            <person name="Zhou L."/>
            <person name="Schneider D.J."/>
            <person name="Cartinhour S.W."/>
            <person name="Nelson W.C."/>
            <person name="Weidman J."/>
            <person name="Watkins K."/>
            <person name="Tran K."/>
            <person name="Khouri H."/>
            <person name="Pierson E.A."/>
            <person name="Pierson L.S. III"/>
            <person name="Thomashow L.S."/>
            <person name="Loper J.E."/>
        </authorList>
    </citation>
    <scope>NUCLEOTIDE SEQUENCE [LARGE SCALE GENOMIC DNA]</scope>
    <source>
        <strain>ATCC BAA-477 / NRRL B-23932 / Pf-5</strain>
    </source>
</reference>
<evidence type="ECO:0000255" key="1">
    <source>
        <dbReference type="HAMAP-Rule" id="MF_01808"/>
    </source>
</evidence>
<evidence type="ECO:0000255" key="2">
    <source>
        <dbReference type="PROSITE-ProRule" id="PRU01246"/>
    </source>
</evidence>
<evidence type="ECO:0000255" key="3">
    <source>
        <dbReference type="PROSITE-ProRule" id="PRU01248"/>
    </source>
</evidence>
<organism>
    <name type="scientific">Pseudomonas fluorescens (strain ATCC BAA-477 / NRRL B-23932 / Pf-5)</name>
    <dbReference type="NCBI Taxonomy" id="220664"/>
    <lineage>
        <taxon>Bacteria</taxon>
        <taxon>Pseudomonadati</taxon>
        <taxon>Pseudomonadota</taxon>
        <taxon>Gammaproteobacteria</taxon>
        <taxon>Pseudomonadales</taxon>
        <taxon>Pseudomonadaceae</taxon>
        <taxon>Pseudomonas</taxon>
    </lineage>
</organism>
<dbReference type="EMBL" id="CP000076">
    <property type="protein sequence ID" value="AAY95204.1"/>
    <property type="molecule type" value="Genomic_DNA"/>
</dbReference>
<dbReference type="RefSeq" id="WP_011064188.1">
    <property type="nucleotide sequence ID" value="NC_004129.6"/>
</dbReference>
<dbReference type="SMR" id="Q4K3W0"/>
<dbReference type="STRING" id="220664.PFL_6015"/>
<dbReference type="KEGG" id="pfl:PFL_6015"/>
<dbReference type="PATRIC" id="fig|220664.5.peg.6139"/>
<dbReference type="eggNOG" id="COG4973">
    <property type="taxonomic scope" value="Bacteria"/>
</dbReference>
<dbReference type="HOGENOM" id="CLU_027562_9_0_6"/>
<dbReference type="Proteomes" id="UP000008540">
    <property type="component" value="Chromosome"/>
</dbReference>
<dbReference type="GO" id="GO:0005737">
    <property type="term" value="C:cytoplasm"/>
    <property type="evidence" value="ECO:0007669"/>
    <property type="project" value="UniProtKB-SubCell"/>
</dbReference>
<dbReference type="GO" id="GO:0003677">
    <property type="term" value="F:DNA binding"/>
    <property type="evidence" value="ECO:0007669"/>
    <property type="project" value="UniProtKB-KW"/>
</dbReference>
<dbReference type="GO" id="GO:0009037">
    <property type="term" value="F:tyrosine-based site-specific recombinase activity"/>
    <property type="evidence" value="ECO:0007669"/>
    <property type="project" value="UniProtKB-UniRule"/>
</dbReference>
<dbReference type="GO" id="GO:0051301">
    <property type="term" value="P:cell division"/>
    <property type="evidence" value="ECO:0007669"/>
    <property type="project" value="UniProtKB-KW"/>
</dbReference>
<dbReference type="GO" id="GO:0007059">
    <property type="term" value="P:chromosome segregation"/>
    <property type="evidence" value="ECO:0007669"/>
    <property type="project" value="UniProtKB-UniRule"/>
</dbReference>
<dbReference type="GO" id="GO:0006313">
    <property type="term" value="P:DNA transposition"/>
    <property type="evidence" value="ECO:0007669"/>
    <property type="project" value="UniProtKB-UniRule"/>
</dbReference>
<dbReference type="CDD" id="cd00798">
    <property type="entry name" value="INT_XerDC_C"/>
    <property type="match status" value="1"/>
</dbReference>
<dbReference type="Gene3D" id="1.10.150.130">
    <property type="match status" value="1"/>
</dbReference>
<dbReference type="Gene3D" id="1.10.443.10">
    <property type="entry name" value="Intergrase catalytic core"/>
    <property type="match status" value="1"/>
</dbReference>
<dbReference type="HAMAP" id="MF_01808">
    <property type="entry name" value="Recomb_XerC_XerD"/>
    <property type="match status" value="1"/>
</dbReference>
<dbReference type="InterPro" id="IPR044068">
    <property type="entry name" value="CB"/>
</dbReference>
<dbReference type="InterPro" id="IPR011010">
    <property type="entry name" value="DNA_brk_join_enz"/>
</dbReference>
<dbReference type="InterPro" id="IPR013762">
    <property type="entry name" value="Integrase-like_cat_sf"/>
</dbReference>
<dbReference type="InterPro" id="IPR002104">
    <property type="entry name" value="Integrase_catalytic"/>
</dbReference>
<dbReference type="InterPro" id="IPR010998">
    <property type="entry name" value="Integrase_recombinase_N"/>
</dbReference>
<dbReference type="InterPro" id="IPR004107">
    <property type="entry name" value="Integrase_SAM-like_N"/>
</dbReference>
<dbReference type="InterPro" id="IPR011931">
    <property type="entry name" value="Recomb_XerC"/>
</dbReference>
<dbReference type="InterPro" id="IPR023009">
    <property type="entry name" value="Tyrosine_recombinase_XerC/XerD"/>
</dbReference>
<dbReference type="InterPro" id="IPR050090">
    <property type="entry name" value="Tyrosine_recombinase_XerCD"/>
</dbReference>
<dbReference type="NCBIfam" id="NF001399">
    <property type="entry name" value="PRK00283.1"/>
    <property type="match status" value="1"/>
</dbReference>
<dbReference type="NCBIfam" id="TIGR02224">
    <property type="entry name" value="recomb_XerC"/>
    <property type="match status" value="1"/>
</dbReference>
<dbReference type="PANTHER" id="PTHR30349">
    <property type="entry name" value="PHAGE INTEGRASE-RELATED"/>
    <property type="match status" value="1"/>
</dbReference>
<dbReference type="PANTHER" id="PTHR30349:SF81">
    <property type="entry name" value="TYROSINE RECOMBINASE XERC"/>
    <property type="match status" value="1"/>
</dbReference>
<dbReference type="Pfam" id="PF02899">
    <property type="entry name" value="Phage_int_SAM_1"/>
    <property type="match status" value="1"/>
</dbReference>
<dbReference type="Pfam" id="PF00589">
    <property type="entry name" value="Phage_integrase"/>
    <property type="match status" value="1"/>
</dbReference>
<dbReference type="SUPFAM" id="SSF56349">
    <property type="entry name" value="DNA breaking-rejoining enzymes"/>
    <property type="match status" value="1"/>
</dbReference>
<dbReference type="SUPFAM" id="SSF47823">
    <property type="entry name" value="lambda integrase-like, N-terminal domain"/>
    <property type="match status" value="1"/>
</dbReference>
<dbReference type="PROSITE" id="PS51900">
    <property type="entry name" value="CB"/>
    <property type="match status" value="1"/>
</dbReference>
<dbReference type="PROSITE" id="PS51898">
    <property type="entry name" value="TYR_RECOMBINASE"/>
    <property type="match status" value="1"/>
</dbReference>
<keyword id="KW-0131">Cell cycle</keyword>
<keyword id="KW-0132">Cell division</keyword>
<keyword id="KW-0159">Chromosome partition</keyword>
<keyword id="KW-0963">Cytoplasm</keyword>
<keyword id="KW-0229">DNA integration</keyword>
<keyword id="KW-0233">DNA recombination</keyword>
<keyword id="KW-0238">DNA-binding</keyword>
<protein>
    <recommendedName>
        <fullName evidence="1">Tyrosine recombinase XerC</fullName>
    </recommendedName>
</protein>
<gene>
    <name evidence="1" type="primary">xerC</name>
    <name type="ordered locus">PFL_6015</name>
</gene>
<accession>Q4K3W0</accession>
<name>XERC_PSEF5</name>